<organism>
    <name type="scientific">Leptospira borgpetersenii serovar Hardjo-bovis (strain JB197)</name>
    <dbReference type="NCBI Taxonomy" id="355277"/>
    <lineage>
        <taxon>Bacteria</taxon>
        <taxon>Pseudomonadati</taxon>
        <taxon>Spirochaetota</taxon>
        <taxon>Spirochaetia</taxon>
        <taxon>Leptospirales</taxon>
        <taxon>Leptospiraceae</taxon>
        <taxon>Leptospira</taxon>
    </lineage>
</organism>
<keyword id="KW-0687">Ribonucleoprotein</keyword>
<keyword id="KW-0689">Ribosomal protein</keyword>
<sequence length="165" mass="19409">MNKRNKVKHLNRNKGHRDALINNMITSLFKYERIESTQAKLKVIRSHAEKLITRAKKNLVADLKPEVQLHNKREVMKRIKDREVVVKLFEDIAKRFESKNGGYTRVLKLVNRASDNSEVGILELTSRKERAILLKERQEKREAQEKAREEKRTARKSDSVPARKK</sequence>
<dbReference type="EMBL" id="CP000350">
    <property type="protein sequence ID" value="ABJ77054.1"/>
    <property type="molecule type" value="Genomic_DNA"/>
</dbReference>
<dbReference type="RefSeq" id="WP_002722932.1">
    <property type="nucleotide sequence ID" value="NC_008510.1"/>
</dbReference>
<dbReference type="SMR" id="Q04PW6"/>
<dbReference type="KEGG" id="lbj:LBJ_2631"/>
<dbReference type="HOGENOM" id="CLU_074407_2_0_12"/>
<dbReference type="Proteomes" id="UP000000656">
    <property type="component" value="Chromosome 1"/>
</dbReference>
<dbReference type="GO" id="GO:0022625">
    <property type="term" value="C:cytosolic large ribosomal subunit"/>
    <property type="evidence" value="ECO:0007669"/>
    <property type="project" value="TreeGrafter"/>
</dbReference>
<dbReference type="GO" id="GO:0003735">
    <property type="term" value="F:structural constituent of ribosome"/>
    <property type="evidence" value="ECO:0007669"/>
    <property type="project" value="InterPro"/>
</dbReference>
<dbReference type="GO" id="GO:0006412">
    <property type="term" value="P:translation"/>
    <property type="evidence" value="ECO:0007669"/>
    <property type="project" value="UniProtKB-UniRule"/>
</dbReference>
<dbReference type="FunFam" id="3.90.1030.10:FF:000008">
    <property type="entry name" value="50S ribosomal protein L17"/>
    <property type="match status" value="1"/>
</dbReference>
<dbReference type="Gene3D" id="3.90.1030.10">
    <property type="entry name" value="Ribosomal protein L17"/>
    <property type="match status" value="1"/>
</dbReference>
<dbReference type="HAMAP" id="MF_01368">
    <property type="entry name" value="Ribosomal_bL17"/>
    <property type="match status" value="1"/>
</dbReference>
<dbReference type="InterPro" id="IPR000456">
    <property type="entry name" value="Ribosomal_bL17"/>
</dbReference>
<dbReference type="InterPro" id="IPR047859">
    <property type="entry name" value="Ribosomal_bL17_CS"/>
</dbReference>
<dbReference type="InterPro" id="IPR036373">
    <property type="entry name" value="Ribosomal_bL17_sf"/>
</dbReference>
<dbReference type="NCBIfam" id="TIGR00059">
    <property type="entry name" value="L17"/>
    <property type="match status" value="1"/>
</dbReference>
<dbReference type="PANTHER" id="PTHR14413:SF16">
    <property type="entry name" value="LARGE RIBOSOMAL SUBUNIT PROTEIN BL17M"/>
    <property type="match status" value="1"/>
</dbReference>
<dbReference type="PANTHER" id="PTHR14413">
    <property type="entry name" value="RIBOSOMAL PROTEIN L17"/>
    <property type="match status" value="1"/>
</dbReference>
<dbReference type="Pfam" id="PF01196">
    <property type="entry name" value="Ribosomal_L17"/>
    <property type="match status" value="1"/>
</dbReference>
<dbReference type="SUPFAM" id="SSF64263">
    <property type="entry name" value="Prokaryotic ribosomal protein L17"/>
    <property type="match status" value="1"/>
</dbReference>
<dbReference type="PROSITE" id="PS01167">
    <property type="entry name" value="RIBOSOMAL_L17"/>
    <property type="match status" value="1"/>
</dbReference>
<protein>
    <recommendedName>
        <fullName evidence="1">Large ribosomal subunit protein bL17</fullName>
    </recommendedName>
    <alternativeName>
        <fullName evidence="3">50S ribosomal protein L17</fullName>
    </alternativeName>
</protein>
<accession>Q04PW6</accession>
<comment type="subunit">
    <text evidence="1">Part of the 50S ribosomal subunit. Contacts protein L32.</text>
</comment>
<comment type="similarity">
    <text evidence="1">Belongs to the bacterial ribosomal protein bL17 family.</text>
</comment>
<evidence type="ECO:0000255" key="1">
    <source>
        <dbReference type="HAMAP-Rule" id="MF_01368"/>
    </source>
</evidence>
<evidence type="ECO:0000256" key="2">
    <source>
        <dbReference type="SAM" id="MobiDB-lite"/>
    </source>
</evidence>
<evidence type="ECO:0000305" key="3"/>
<feature type="chain" id="PRO_1000055861" description="Large ribosomal subunit protein bL17">
    <location>
        <begin position="1"/>
        <end position="165"/>
    </location>
</feature>
<feature type="region of interest" description="Disordered" evidence="2">
    <location>
        <begin position="138"/>
        <end position="165"/>
    </location>
</feature>
<feature type="compositionally biased region" description="Basic and acidic residues" evidence="2">
    <location>
        <begin position="138"/>
        <end position="158"/>
    </location>
</feature>
<proteinExistence type="inferred from homology"/>
<reference key="1">
    <citation type="journal article" date="2006" name="Proc. Natl. Acad. Sci. U.S.A.">
        <title>Genome reduction in Leptospira borgpetersenii reflects limited transmission potential.</title>
        <authorList>
            <person name="Bulach D.M."/>
            <person name="Zuerner R.L."/>
            <person name="Wilson P."/>
            <person name="Seemann T."/>
            <person name="McGrath A."/>
            <person name="Cullen P.A."/>
            <person name="Davis J."/>
            <person name="Johnson M."/>
            <person name="Kuczek E."/>
            <person name="Alt D.P."/>
            <person name="Peterson-Burch B."/>
            <person name="Coppel R.L."/>
            <person name="Rood J.I."/>
            <person name="Davies J.K."/>
            <person name="Adler B."/>
        </authorList>
    </citation>
    <scope>NUCLEOTIDE SEQUENCE [LARGE SCALE GENOMIC DNA]</scope>
    <source>
        <strain>JB197</strain>
    </source>
</reference>
<name>RL17_LEPBJ</name>
<gene>
    <name evidence="1" type="primary">rplQ</name>
    <name type="ordered locus">LBJ_2631</name>
</gene>